<evidence type="ECO:0000255" key="1">
    <source>
        <dbReference type="HAMAP-Rule" id="MF_00500"/>
    </source>
</evidence>
<evidence type="ECO:0000305" key="2"/>
<sequence>MANTVSAKKMTRKIAKRTAINRSRRSRMRTFVRKVEEAIASGDQGQALTALRAAEPEIMRAAQNGIVHKNNASRKVSRLAARVKAIAA</sequence>
<gene>
    <name evidence="1" type="primary">rpsT</name>
    <name type="ordered locus">Mext_4890</name>
</gene>
<reference key="1">
    <citation type="submission" date="2007-12" db="EMBL/GenBank/DDBJ databases">
        <title>Complete sequence of Methylobacterium extorquens PA1.</title>
        <authorList>
            <consortium name="US DOE Joint Genome Institute"/>
            <person name="Copeland A."/>
            <person name="Lucas S."/>
            <person name="Lapidus A."/>
            <person name="Barry K."/>
            <person name="Glavina del Rio T."/>
            <person name="Dalin E."/>
            <person name="Tice H."/>
            <person name="Pitluck S."/>
            <person name="Saunders E."/>
            <person name="Brettin T."/>
            <person name="Bruce D."/>
            <person name="Detter J.C."/>
            <person name="Han C."/>
            <person name="Schmutz J."/>
            <person name="Larimer F."/>
            <person name="Land M."/>
            <person name="Hauser L."/>
            <person name="Kyrpides N."/>
            <person name="Kim E."/>
            <person name="Marx C."/>
            <person name="Richardson P."/>
        </authorList>
    </citation>
    <scope>NUCLEOTIDE SEQUENCE [LARGE SCALE GENOMIC DNA]</scope>
    <source>
        <strain>PA1</strain>
    </source>
</reference>
<feature type="chain" id="PRO_1000126474" description="Small ribosomal subunit protein bS20">
    <location>
        <begin position="1"/>
        <end position="88"/>
    </location>
</feature>
<proteinExistence type="inferred from homology"/>
<comment type="function">
    <text evidence="1">Binds directly to 16S ribosomal RNA.</text>
</comment>
<comment type="similarity">
    <text evidence="1">Belongs to the bacterial ribosomal protein bS20 family.</text>
</comment>
<protein>
    <recommendedName>
        <fullName evidence="1">Small ribosomal subunit protein bS20</fullName>
    </recommendedName>
    <alternativeName>
        <fullName evidence="2">30S ribosomal protein S20</fullName>
    </alternativeName>
</protein>
<accession>A9W9L9</accession>
<name>RS20_METEP</name>
<organism>
    <name type="scientific">Methylorubrum extorquens (strain PA1)</name>
    <name type="common">Methylobacterium extorquens</name>
    <dbReference type="NCBI Taxonomy" id="419610"/>
    <lineage>
        <taxon>Bacteria</taxon>
        <taxon>Pseudomonadati</taxon>
        <taxon>Pseudomonadota</taxon>
        <taxon>Alphaproteobacteria</taxon>
        <taxon>Hyphomicrobiales</taxon>
        <taxon>Methylobacteriaceae</taxon>
        <taxon>Methylorubrum</taxon>
    </lineage>
</organism>
<dbReference type="EMBL" id="CP000908">
    <property type="protein sequence ID" value="ABY33258.1"/>
    <property type="molecule type" value="Genomic_DNA"/>
</dbReference>
<dbReference type="RefSeq" id="WP_003598297.1">
    <property type="nucleotide sequence ID" value="NC_010172.1"/>
</dbReference>
<dbReference type="SMR" id="A9W9L9"/>
<dbReference type="GeneID" id="72992610"/>
<dbReference type="KEGG" id="mex:Mext_4890"/>
<dbReference type="eggNOG" id="COG0268">
    <property type="taxonomic scope" value="Bacteria"/>
</dbReference>
<dbReference type="HOGENOM" id="CLU_160655_3_0_5"/>
<dbReference type="BioCyc" id="MEXT419610:MEXT_RS24560-MONOMER"/>
<dbReference type="GO" id="GO:0005829">
    <property type="term" value="C:cytosol"/>
    <property type="evidence" value="ECO:0007669"/>
    <property type="project" value="TreeGrafter"/>
</dbReference>
<dbReference type="GO" id="GO:0015935">
    <property type="term" value="C:small ribosomal subunit"/>
    <property type="evidence" value="ECO:0007669"/>
    <property type="project" value="TreeGrafter"/>
</dbReference>
<dbReference type="GO" id="GO:0070181">
    <property type="term" value="F:small ribosomal subunit rRNA binding"/>
    <property type="evidence" value="ECO:0007669"/>
    <property type="project" value="TreeGrafter"/>
</dbReference>
<dbReference type="GO" id="GO:0003735">
    <property type="term" value="F:structural constituent of ribosome"/>
    <property type="evidence" value="ECO:0007669"/>
    <property type="project" value="InterPro"/>
</dbReference>
<dbReference type="GO" id="GO:0006412">
    <property type="term" value="P:translation"/>
    <property type="evidence" value="ECO:0007669"/>
    <property type="project" value="UniProtKB-UniRule"/>
</dbReference>
<dbReference type="FunFam" id="1.20.58.110:FF:000001">
    <property type="entry name" value="30S ribosomal protein S20"/>
    <property type="match status" value="1"/>
</dbReference>
<dbReference type="Gene3D" id="1.20.58.110">
    <property type="entry name" value="Ribosomal protein S20"/>
    <property type="match status" value="1"/>
</dbReference>
<dbReference type="HAMAP" id="MF_00500">
    <property type="entry name" value="Ribosomal_bS20"/>
    <property type="match status" value="1"/>
</dbReference>
<dbReference type="InterPro" id="IPR002583">
    <property type="entry name" value="Ribosomal_bS20"/>
</dbReference>
<dbReference type="InterPro" id="IPR036510">
    <property type="entry name" value="Ribosomal_bS20_sf"/>
</dbReference>
<dbReference type="NCBIfam" id="TIGR00029">
    <property type="entry name" value="S20"/>
    <property type="match status" value="1"/>
</dbReference>
<dbReference type="PANTHER" id="PTHR33398">
    <property type="entry name" value="30S RIBOSOMAL PROTEIN S20"/>
    <property type="match status" value="1"/>
</dbReference>
<dbReference type="PANTHER" id="PTHR33398:SF1">
    <property type="entry name" value="SMALL RIBOSOMAL SUBUNIT PROTEIN BS20C"/>
    <property type="match status" value="1"/>
</dbReference>
<dbReference type="Pfam" id="PF01649">
    <property type="entry name" value="Ribosomal_S20p"/>
    <property type="match status" value="1"/>
</dbReference>
<dbReference type="SUPFAM" id="SSF46992">
    <property type="entry name" value="Ribosomal protein S20"/>
    <property type="match status" value="1"/>
</dbReference>
<keyword id="KW-0687">Ribonucleoprotein</keyword>
<keyword id="KW-0689">Ribosomal protein</keyword>
<keyword id="KW-0694">RNA-binding</keyword>
<keyword id="KW-0699">rRNA-binding</keyword>